<feature type="chain" id="PRO_0000411642" description="UPF0324 membrane protein SPs0941">
    <location>
        <begin position="1"/>
        <end position="339"/>
    </location>
</feature>
<feature type="transmembrane region" description="Helical" evidence="1">
    <location>
        <begin position="7"/>
        <end position="24"/>
    </location>
</feature>
<feature type="transmembrane region" description="Helical" evidence="1">
    <location>
        <begin position="28"/>
        <end position="50"/>
    </location>
</feature>
<feature type="transmembrane region" description="Helical" evidence="1">
    <location>
        <begin position="57"/>
        <end position="79"/>
    </location>
</feature>
<feature type="transmembrane region" description="Helical" evidence="1">
    <location>
        <begin position="84"/>
        <end position="106"/>
    </location>
</feature>
<feature type="transmembrane region" description="Helical" evidence="1">
    <location>
        <begin position="118"/>
        <end position="140"/>
    </location>
</feature>
<feature type="transmembrane region" description="Helical" evidence="1">
    <location>
        <begin position="150"/>
        <end position="172"/>
    </location>
</feature>
<feature type="transmembrane region" description="Helical" evidence="1">
    <location>
        <begin position="256"/>
        <end position="275"/>
    </location>
</feature>
<feature type="transmembrane region" description="Helical" evidence="1">
    <location>
        <begin position="290"/>
        <end position="307"/>
    </location>
</feature>
<feature type="transmembrane region" description="Helical" evidence="1">
    <location>
        <begin position="314"/>
        <end position="336"/>
    </location>
</feature>
<reference key="1">
    <citation type="journal article" date="2003" name="Genome Res.">
        <title>Genome sequence of an M3 strain of Streptococcus pyogenes reveals a large-scale genomic rearrangement in invasive strains and new insights into phage evolution.</title>
        <authorList>
            <person name="Nakagawa I."/>
            <person name="Kurokawa K."/>
            <person name="Yamashita A."/>
            <person name="Nakata M."/>
            <person name="Tomiyasu Y."/>
            <person name="Okahashi N."/>
            <person name="Kawabata S."/>
            <person name="Yamazaki K."/>
            <person name="Shiba T."/>
            <person name="Yasunaga T."/>
            <person name="Hayashi H."/>
            <person name="Hattori M."/>
            <person name="Hamada S."/>
        </authorList>
    </citation>
    <scope>NUCLEOTIDE SEQUENCE [LARGE SCALE GENOMIC DNA]</scope>
    <source>
        <strain>SSI-1</strain>
    </source>
</reference>
<sequence>MSTHLRKLPGLLLCLLLALPAWYLGRLFPIIGAPVFAILLGMLLALFYHHRDKTKEGISFTSKYILQTAVVLLGFGLNLTQVMAVGMQSLPIIISTIATALLVAYGLQKWLRLDVNTATLVGIGSSICGGSAIAATAPVIKAKDDEVAKAISVIFLFNMLAALLFPSLGQLLGLSNEGFAIFAGTAVNDTSSVTATATAWDALHHSNTLDGATIVKLTRTLAILPITLGLSLYRAKKEHDIVTEENFSLRKSFPRFILFFLLASLITTLMTSLGVSADSFHSLKTLSKFFIVMAMAAIGLNTNLVKLIKTGGQAILLGSICWVAITLVSLAMQLSLGIW</sequence>
<dbReference type="EMBL" id="BA000034">
    <property type="protein sequence ID" value="BAC64036.1"/>
    <property type="molecule type" value="Genomic_DNA"/>
</dbReference>
<dbReference type="RefSeq" id="WP_011054454.1">
    <property type="nucleotide sequence ID" value="NC_004606.1"/>
</dbReference>
<dbReference type="KEGG" id="sps:SPs0941"/>
<dbReference type="HOGENOM" id="CLU_033541_2_1_9"/>
<dbReference type="GO" id="GO:0005886">
    <property type="term" value="C:plasma membrane"/>
    <property type="evidence" value="ECO:0007669"/>
    <property type="project" value="UniProtKB-SubCell"/>
</dbReference>
<dbReference type="InterPro" id="IPR018383">
    <property type="entry name" value="UPF0324_pro"/>
</dbReference>
<dbReference type="PANTHER" id="PTHR30106">
    <property type="entry name" value="INNER MEMBRANE PROTEIN YEIH-RELATED"/>
    <property type="match status" value="1"/>
</dbReference>
<dbReference type="PANTHER" id="PTHR30106:SF1">
    <property type="entry name" value="UPF0324 MEMBRANE PROTEIN FN0533"/>
    <property type="match status" value="1"/>
</dbReference>
<dbReference type="Pfam" id="PF03601">
    <property type="entry name" value="Cons_hypoth698"/>
    <property type="match status" value="1"/>
</dbReference>
<evidence type="ECO:0000255" key="1"/>
<evidence type="ECO:0000305" key="2"/>
<name>Y740_STRPQ</name>
<protein>
    <recommendedName>
        <fullName>UPF0324 membrane protein SPs0941</fullName>
    </recommendedName>
</protein>
<gene>
    <name type="ordered locus">SPs0941</name>
</gene>
<comment type="subcellular location">
    <subcellularLocation>
        <location evidence="2">Cell membrane</location>
        <topology evidence="2">Multi-pass membrane protein</topology>
    </subcellularLocation>
</comment>
<comment type="similarity">
    <text evidence="2">Belongs to the UPF0324 family.</text>
</comment>
<organism>
    <name type="scientific">Streptococcus pyogenes serotype M3 (strain SSI-1)</name>
    <dbReference type="NCBI Taxonomy" id="193567"/>
    <lineage>
        <taxon>Bacteria</taxon>
        <taxon>Bacillati</taxon>
        <taxon>Bacillota</taxon>
        <taxon>Bacilli</taxon>
        <taxon>Lactobacillales</taxon>
        <taxon>Streptococcaceae</taxon>
        <taxon>Streptococcus</taxon>
    </lineage>
</organism>
<accession>P0DH05</accession>
<accession>Q79XB0</accession>
<accession>Q8K7M5</accession>
<keyword id="KW-1003">Cell membrane</keyword>
<keyword id="KW-0472">Membrane</keyword>
<keyword id="KW-0812">Transmembrane</keyword>
<keyword id="KW-1133">Transmembrane helix</keyword>
<proteinExistence type="inferred from homology"/>